<accession>B4SAJ4</accession>
<feature type="chain" id="PRO_1000142541" description="Large ribosomal subunit protein bL25">
    <location>
        <begin position="1"/>
        <end position="199"/>
    </location>
</feature>
<gene>
    <name evidence="1" type="primary">rplY</name>
    <name evidence="1" type="synonym">ctc</name>
    <name type="ordered locus">Ppha_1643</name>
</gene>
<reference key="1">
    <citation type="submission" date="2008-06" db="EMBL/GenBank/DDBJ databases">
        <title>Complete sequence of Pelodictyon phaeoclathratiforme BU-1.</title>
        <authorList>
            <consortium name="US DOE Joint Genome Institute"/>
            <person name="Lucas S."/>
            <person name="Copeland A."/>
            <person name="Lapidus A."/>
            <person name="Glavina del Rio T."/>
            <person name="Dalin E."/>
            <person name="Tice H."/>
            <person name="Bruce D."/>
            <person name="Goodwin L."/>
            <person name="Pitluck S."/>
            <person name="Schmutz J."/>
            <person name="Larimer F."/>
            <person name="Land M."/>
            <person name="Hauser L."/>
            <person name="Kyrpides N."/>
            <person name="Mikhailova N."/>
            <person name="Liu Z."/>
            <person name="Li T."/>
            <person name="Zhao F."/>
            <person name="Overmann J."/>
            <person name="Bryant D.A."/>
            <person name="Richardson P."/>
        </authorList>
    </citation>
    <scope>NUCLEOTIDE SEQUENCE [LARGE SCALE GENOMIC DNA]</scope>
    <source>
        <strain>DSM 5477 / BU-1</strain>
    </source>
</reference>
<comment type="function">
    <text evidence="1">This is one of the proteins that binds to the 5S RNA in the ribosome where it forms part of the central protuberance.</text>
</comment>
<comment type="subunit">
    <text evidence="1">Part of the 50S ribosomal subunit; part of the 5S rRNA/L5/L18/L25 subcomplex. Contacts the 5S rRNA. Binds to the 5S rRNA independently of L5 and L18.</text>
</comment>
<comment type="similarity">
    <text evidence="1">Belongs to the bacterial ribosomal protein bL25 family. CTC subfamily.</text>
</comment>
<evidence type="ECO:0000255" key="1">
    <source>
        <dbReference type="HAMAP-Rule" id="MF_01334"/>
    </source>
</evidence>
<evidence type="ECO:0000305" key="2"/>
<dbReference type="EMBL" id="CP001110">
    <property type="protein sequence ID" value="ACF43880.1"/>
    <property type="molecule type" value="Genomic_DNA"/>
</dbReference>
<dbReference type="RefSeq" id="WP_012508367.1">
    <property type="nucleotide sequence ID" value="NC_011060.1"/>
</dbReference>
<dbReference type="SMR" id="B4SAJ4"/>
<dbReference type="STRING" id="324925.Ppha_1643"/>
<dbReference type="KEGG" id="pph:Ppha_1643"/>
<dbReference type="eggNOG" id="COG1825">
    <property type="taxonomic scope" value="Bacteria"/>
</dbReference>
<dbReference type="HOGENOM" id="CLU_075939_2_1_10"/>
<dbReference type="OrthoDB" id="9786489at2"/>
<dbReference type="Proteomes" id="UP000002724">
    <property type="component" value="Chromosome"/>
</dbReference>
<dbReference type="GO" id="GO:0022625">
    <property type="term" value="C:cytosolic large ribosomal subunit"/>
    <property type="evidence" value="ECO:0007669"/>
    <property type="project" value="TreeGrafter"/>
</dbReference>
<dbReference type="GO" id="GO:0008097">
    <property type="term" value="F:5S rRNA binding"/>
    <property type="evidence" value="ECO:0007669"/>
    <property type="project" value="InterPro"/>
</dbReference>
<dbReference type="GO" id="GO:0003735">
    <property type="term" value="F:structural constituent of ribosome"/>
    <property type="evidence" value="ECO:0007669"/>
    <property type="project" value="InterPro"/>
</dbReference>
<dbReference type="GO" id="GO:0006412">
    <property type="term" value="P:translation"/>
    <property type="evidence" value="ECO:0007669"/>
    <property type="project" value="UniProtKB-UniRule"/>
</dbReference>
<dbReference type="CDD" id="cd00495">
    <property type="entry name" value="Ribosomal_L25_TL5_CTC"/>
    <property type="match status" value="1"/>
</dbReference>
<dbReference type="Gene3D" id="2.170.120.20">
    <property type="entry name" value="Ribosomal protein L25, beta domain"/>
    <property type="match status" value="1"/>
</dbReference>
<dbReference type="Gene3D" id="2.40.240.10">
    <property type="entry name" value="Ribosomal Protein L25, Chain P"/>
    <property type="match status" value="1"/>
</dbReference>
<dbReference type="HAMAP" id="MF_01334">
    <property type="entry name" value="Ribosomal_bL25_CTC"/>
    <property type="match status" value="1"/>
</dbReference>
<dbReference type="InterPro" id="IPR020056">
    <property type="entry name" value="Rbsml_bL25/Gln-tRNA_synth_N"/>
</dbReference>
<dbReference type="InterPro" id="IPR011035">
    <property type="entry name" value="Ribosomal_bL25/Gln-tRNA_synth"/>
</dbReference>
<dbReference type="InterPro" id="IPR020057">
    <property type="entry name" value="Ribosomal_bL25_b-dom"/>
</dbReference>
<dbReference type="InterPro" id="IPR037121">
    <property type="entry name" value="Ribosomal_bL25_C"/>
</dbReference>
<dbReference type="InterPro" id="IPR001021">
    <property type="entry name" value="Ribosomal_bL25_long"/>
</dbReference>
<dbReference type="InterPro" id="IPR029751">
    <property type="entry name" value="Ribosomal_L25_dom"/>
</dbReference>
<dbReference type="InterPro" id="IPR020930">
    <property type="entry name" value="Ribosomal_uL5_bac-type"/>
</dbReference>
<dbReference type="NCBIfam" id="TIGR00731">
    <property type="entry name" value="bL25_bact_ctc"/>
    <property type="match status" value="1"/>
</dbReference>
<dbReference type="NCBIfam" id="NF004136">
    <property type="entry name" value="PRK05618.3-2"/>
    <property type="match status" value="1"/>
</dbReference>
<dbReference type="PANTHER" id="PTHR33284">
    <property type="entry name" value="RIBOSOMAL PROTEIN L25/GLN-TRNA SYNTHETASE, ANTI-CODON-BINDING DOMAIN-CONTAINING PROTEIN"/>
    <property type="match status" value="1"/>
</dbReference>
<dbReference type="PANTHER" id="PTHR33284:SF1">
    <property type="entry name" value="RIBOSOMAL PROTEIN L25_GLN-TRNA SYNTHETASE, ANTI-CODON-BINDING DOMAIN-CONTAINING PROTEIN"/>
    <property type="match status" value="1"/>
</dbReference>
<dbReference type="Pfam" id="PF01386">
    <property type="entry name" value="Ribosomal_L25p"/>
    <property type="match status" value="1"/>
</dbReference>
<dbReference type="Pfam" id="PF14693">
    <property type="entry name" value="Ribosomal_TL5_C"/>
    <property type="match status" value="1"/>
</dbReference>
<dbReference type="SUPFAM" id="SSF50715">
    <property type="entry name" value="Ribosomal protein L25-like"/>
    <property type="match status" value="1"/>
</dbReference>
<organism>
    <name type="scientific">Pelodictyon phaeoclathratiforme (strain DSM 5477 / BU-1)</name>
    <dbReference type="NCBI Taxonomy" id="324925"/>
    <lineage>
        <taxon>Bacteria</taxon>
        <taxon>Pseudomonadati</taxon>
        <taxon>Chlorobiota</taxon>
        <taxon>Chlorobiia</taxon>
        <taxon>Chlorobiales</taxon>
        <taxon>Chlorobiaceae</taxon>
        <taxon>Chlorobium/Pelodictyon group</taxon>
        <taxon>Pelodictyon</taxon>
    </lineage>
</organism>
<name>RL25_PELPB</name>
<keyword id="KW-1185">Reference proteome</keyword>
<keyword id="KW-0687">Ribonucleoprotein</keyword>
<keyword id="KW-0689">Ribosomal protein</keyword>
<keyword id="KW-0694">RNA-binding</keyword>
<keyword id="KW-0699">rRNA-binding</keyword>
<proteinExistence type="inferred from homology"/>
<protein>
    <recommendedName>
        <fullName evidence="1">Large ribosomal subunit protein bL25</fullName>
    </recommendedName>
    <alternativeName>
        <fullName evidence="2">50S ribosomal protein L25</fullName>
    </alternativeName>
    <alternativeName>
        <fullName evidence="1">General stress protein CTC</fullName>
    </alternativeName>
</protein>
<sequence length="199" mass="21697">METIVLGVEPRVIKKKNAEKLRKNGIVPGVIYHKGEETIAISVNELALRKLVHSAESHIIDLQFPDGKIKRSFIKDVQFHPVTDRIIHTDFQLFSAEEIIELEVPVAVSGESAGVEKGGKLLIILHALTIKGKPEDMPDHLVVDVTALEIGHSIHVKEIPLDAYTGLQIMDDPDTPVITVLASKKEAEATPEAAVATAS</sequence>